<protein>
    <recommendedName>
        <fullName evidence="1">Cyclic pyranopterin monophosphate synthase</fullName>
        <ecNumber evidence="1">4.6.1.17</ecNumber>
    </recommendedName>
    <alternativeName>
        <fullName evidence="1">Molybdenum cofactor biosynthesis protein C</fullName>
    </alternativeName>
</protein>
<comment type="function">
    <text evidence="1">Catalyzes the conversion of (8S)-3',8-cyclo-7,8-dihydroguanosine 5'-triphosphate to cyclic pyranopterin monophosphate (cPMP).</text>
</comment>
<comment type="catalytic activity">
    <reaction evidence="1">
        <text>(8S)-3',8-cyclo-7,8-dihydroguanosine 5'-triphosphate = cyclic pyranopterin phosphate + diphosphate</text>
        <dbReference type="Rhea" id="RHEA:49580"/>
        <dbReference type="ChEBI" id="CHEBI:33019"/>
        <dbReference type="ChEBI" id="CHEBI:59648"/>
        <dbReference type="ChEBI" id="CHEBI:131766"/>
        <dbReference type="EC" id="4.6.1.17"/>
    </reaction>
</comment>
<comment type="pathway">
    <text evidence="1">Cofactor biosynthesis; molybdopterin biosynthesis.</text>
</comment>
<comment type="subunit">
    <text evidence="1">Homohexamer; trimer of dimers.</text>
</comment>
<comment type="similarity">
    <text evidence="1">Belongs to the MoaC family.</text>
</comment>
<sequence length="158" mass="16652">MMSKLTHIDQTGAANMVDVGAKDETERQAVAEGSVRMNLETLALILEGNAAKGDVIGAARLAGIMAAKKTADLIPLCHPLMLTKVAVEIEPDQTLPGLRVRALAKLKGRTGVEMEALTAVSVTCLTIYDMAKAVDKHMEIGGIRVTEKGGGKSGDWKA</sequence>
<proteinExistence type="inferred from homology"/>
<gene>
    <name evidence="1" type="primary">moaC</name>
    <name type="ordered locus">Oant_2047</name>
</gene>
<name>MOAC_BRUA4</name>
<keyword id="KW-0456">Lyase</keyword>
<keyword id="KW-0501">Molybdenum cofactor biosynthesis</keyword>
<keyword id="KW-1185">Reference proteome</keyword>
<evidence type="ECO:0000255" key="1">
    <source>
        <dbReference type="HAMAP-Rule" id="MF_01224"/>
    </source>
</evidence>
<reference key="1">
    <citation type="journal article" date="2011" name="J. Bacteriol.">
        <title>Genome of Ochrobactrum anthropi ATCC 49188 T, a versatile opportunistic pathogen and symbiont of several eukaryotic hosts.</title>
        <authorList>
            <person name="Chain P.S."/>
            <person name="Lang D.M."/>
            <person name="Comerci D.J."/>
            <person name="Malfatti S.A."/>
            <person name="Vergez L.M."/>
            <person name="Shin M."/>
            <person name="Ugalde R.A."/>
            <person name="Garcia E."/>
            <person name="Tolmasky M.E."/>
        </authorList>
    </citation>
    <scope>NUCLEOTIDE SEQUENCE [LARGE SCALE GENOMIC DNA]</scope>
    <source>
        <strain>ATCC 49188 / DSM 6882 / CCUG 24695 / JCM 21032 / LMG 3331 / NBRC 15819 / NCTC 12168 / Alc 37</strain>
    </source>
</reference>
<accession>A6X0K9</accession>
<feature type="chain" id="PRO_1000054114" description="Cyclic pyranopterin monophosphate synthase">
    <location>
        <begin position="1"/>
        <end position="158"/>
    </location>
</feature>
<feature type="active site" evidence="1">
    <location>
        <position position="129"/>
    </location>
</feature>
<feature type="binding site" evidence="1">
    <location>
        <begin position="76"/>
        <end position="78"/>
    </location>
    <ligand>
        <name>substrate</name>
    </ligand>
</feature>
<feature type="binding site" evidence="1">
    <location>
        <begin position="114"/>
        <end position="115"/>
    </location>
    <ligand>
        <name>substrate</name>
    </ligand>
</feature>
<organism>
    <name type="scientific">Brucella anthropi (strain ATCC 49188 / DSM 6882 / CCUG 24695 / JCM 21032 / LMG 3331 / NBRC 15819 / NCTC 12168 / Alc 37)</name>
    <name type="common">Ochrobactrum anthropi</name>
    <dbReference type="NCBI Taxonomy" id="439375"/>
    <lineage>
        <taxon>Bacteria</taxon>
        <taxon>Pseudomonadati</taxon>
        <taxon>Pseudomonadota</taxon>
        <taxon>Alphaproteobacteria</taxon>
        <taxon>Hyphomicrobiales</taxon>
        <taxon>Brucellaceae</taxon>
        <taxon>Brucella/Ochrobactrum group</taxon>
        <taxon>Brucella</taxon>
    </lineage>
</organism>
<dbReference type="EC" id="4.6.1.17" evidence="1"/>
<dbReference type="EMBL" id="CP000758">
    <property type="protein sequence ID" value="ABS14763.1"/>
    <property type="molecule type" value="Genomic_DNA"/>
</dbReference>
<dbReference type="RefSeq" id="WP_012091963.1">
    <property type="nucleotide sequence ID" value="NC_009667.1"/>
</dbReference>
<dbReference type="SMR" id="A6X0K9"/>
<dbReference type="STRING" id="439375.Oant_2047"/>
<dbReference type="KEGG" id="oan:Oant_2047"/>
<dbReference type="PATRIC" id="fig|439375.7.peg.2152"/>
<dbReference type="eggNOG" id="COG0315">
    <property type="taxonomic scope" value="Bacteria"/>
</dbReference>
<dbReference type="HOGENOM" id="CLU_074693_1_1_5"/>
<dbReference type="PhylomeDB" id="A6X0K9"/>
<dbReference type="UniPathway" id="UPA00344"/>
<dbReference type="Proteomes" id="UP000002301">
    <property type="component" value="Chromosome 1"/>
</dbReference>
<dbReference type="GO" id="GO:0061799">
    <property type="term" value="F:cyclic pyranopterin monophosphate synthase activity"/>
    <property type="evidence" value="ECO:0007669"/>
    <property type="project" value="UniProtKB-UniRule"/>
</dbReference>
<dbReference type="GO" id="GO:0006777">
    <property type="term" value="P:Mo-molybdopterin cofactor biosynthetic process"/>
    <property type="evidence" value="ECO:0007669"/>
    <property type="project" value="UniProtKB-UniRule"/>
</dbReference>
<dbReference type="CDD" id="cd01420">
    <property type="entry name" value="MoaC_PE"/>
    <property type="match status" value="1"/>
</dbReference>
<dbReference type="Gene3D" id="3.30.70.640">
    <property type="entry name" value="Molybdopterin cofactor biosynthesis C (MoaC) domain"/>
    <property type="match status" value="1"/>
</dbReference>
<dbReference type="HAMAP" id="MF_01224_B">
    <property type="entry name" value="MoaC_B"/>
    <property type="match status" value="1"/>
</dbReference>
<dbReference type="InterPro" id="IPR023045">
    <property type="entry name" value="MoaC"/>
</dbReference>
<dbReference type="InterPro" id="IPR047594">
    <property type="entry name" value="MoaC_bact/euk"/>
</dbReference>
<dbReference type="InterPro" id="IPR036522">
    <property type="entry name" value="MoaC_sf"/>
</dbReference>
<dbReference type="InterPro" id="IPR050105">
    <property type="entry name" value="MoCo_biosynth_MoaA/MoaC"/>
</dbReference>
<dbReference type="InterPro" id="IPR002820">
    <property type="entry name" value="Mopterin_CF_biosynth-C_dom"/>
</dbReference>
<dbReference type="NCBIfam" id="TIGR00581">
    <property type="entry name" value="moaC"/>
    <property type="match status" value="1"/>
</dbReference>
<dbReference type="NCBIfam" id="NF006870">
    <property type="entry name" value="PRK09364.1"/>
    <property type="match status" value="1"/>
</dbReference>
<dbReference type="PANTHER" id="PTHR22960">
    <property type="entry name" value="MOLYBDOPTERIN COFACTOR SYNTHESIS PROTEIN A"/>
    <property type="match status" value="1"/>
</dbReference>
<dbReference type="Pfam" id="PF01967">
    <property type="entry name" value="MoaC"/>
    <property type="match status" value="1"/>
</dbReference>
<dbReference type="SUPFAM" id="SSF55040">
    <property type="entry name" value="Molybdenum cofactor biosynthesis protein C, MoaC"/>
    <property type="match status" value="1"/>
</dbReference>